<dbReference type="EC" id="3.1.11.-" evidence="1"/>
<dbReference type="EC" id="3.1.13.-" evidence="1"/>
<dbReference type="EMBL" id="CP002505">
    <property type="protein sequence ID" value="ADW75743.1"/>
    <property type="molecule type" value="Genomic_DNA"/>
</dbReference>
<dbReference type="RefSeq" id="WP_013577430.1">
    <property type="nucleotide sequence ID" value="NC_015061.1"/>
</dbReference>
<dbReference type="SMR" id="E8XYF5"/>
<dbReference type="KEGG" id="rah:Rahaq_4155"/>
<dbReference type="eggNOG" id="COG0084">
    <property type="taxonomic scope" value="Bacteria"/>
</dbReference>
<dbReference type="HOGENOM" id="CLU_031506_1_2_6"/>
<dbReference type="OrthoDB" id="9810005at2"/>
<dbReference type="Proteomes" id="UP000007257">
    <property type="component" value="Chromosome"/>
</dbReference>
<dbReference type="GO" id="GO:0005737">
    <property type="term" value="C:cytoplasm"/>
    <property type="evidence" value="ECO:0007669"/>
    <property type="project" value="UniProtKB-SubCell"/>
</dbReference>
<dbReference type="GO" id="GO:0000175">
    <property type="term" value="F:3'-5'-RNA exonuclease activity"/>
    <property type="evidence" value="ECO:0007669"/>
    <property type="project" value="UniProtKB-UniRule"/>
</dbReference>
<dbReference type="GO" id="GO:0000287">
    <property type="term" value="F:magnesium ion binding"/>
    <property type="evidence" value="ECO:0007669"/>
    <property type="project" value="UniProtKB-UniRule"/>
</dbReference>
<dbReference type="GO" id="GO:0008310">
    <property type="term" value="F:single-stranded DNA 3'-5' DNA exonuclease activity"/>
    <property type="evidence" value="ECO:0007669"/>
    <property type="project" value="UniProtKB-UniRule"/>
</dbReference>
<dbReference type="CDD" id="cd01310">
    <property type="entry name" value="TatD_DNAse"/>
    <property type="match status" value="1"/>
</dbReference>
<dbReference type="FunFam" id="3.20.20.140:FF:000018">
    <property type="entry name" value="3'-5' ssDNA/RNA exonuclease TatD"/>
    <property type="match status" value="1"/>
</dbReference>
<dbReference type="Gene3D" id="3.20.20.140">
    <property type="entry name" value="Metal-dependent hydrolases"/>
    <property type="match status" value="1"/>
</dbReference>
<dbReference type="HAMAP" id="MF_00901">
    <property type="entry name" value="TatD_exonuclease"/>
    <property type="match status" value="1"/>
</dbReference>
<dbReference type="InterPro" id="IPR018228">
    <property type="entry name" value="DNase_TatD-rel_CS"/>
</dbReference>
<dbReference type="InterPro" id="IPR024918">
    <property type="entry name" value="Exonuc_TatD"/>
</dbReference>
<dbReference type="InterPro" id="IPR032466">
    <property type="entry name" value="Metal_Hydrolase"/>
</dbReference>
<dbReference type="InterPro" id="IPR001130">
    <property type="entry name" value="TatD-like"/>
</dbReference>
<dbReference type="InterPro" id="IPR050891">
    <property type="entry name" value="TatD-type_Hydrolase"/>
</dbReference>
<dbReference type="NCBIfam" id="NF007745">
    <property type="entry name" value="PRK10425.1"/>
    <property type="match status" value="1"/>
</dbReference>
<dbReference type="PANTHER" id="PTHR10060:SF15">
    <property type="entry name" value="DEOXYRIBONUCLEASE TATDN1"/>
    <property type="match status" value="1"/>
</dbReference>
<dbReference type="PANTHER" id="PTHR10060">
    <property type="entry name" value="TATD FAMILY DEOXYRIBONUCLEASE"/>
    <property type="match status" value="1"/>
</dbReference>
<dbReference type="Pfam" id="PF01026">
    <property type="entry name" value="TatD_DNase"/>
    <property type="match status" value="1"/>
</dbReference>
<dbReference type="PIRSF" id="PIRSF005902">
    <property type="entry name" value="DNase_TatD"/>
    <property type="match status" value="1"/>
</dbReference>
<dbReference type="SUPFAM" id="SSF51556">
    <property type="entry name" value="Metallo-dependent hydrolases"/>
    <property type="match status" value="1"/>
</dbReference>
<dbReference type="PROSITE" id="PS01090">
    <property type="entry name" value="TATD_2"/>
    <property type="match status" value="1"/>
</dbReference>
<sequence>MFEIGINLTSSQFDKDRLQVVERARTAGLSGMLITGTSAQESVEAQKMADEHPDFCWSTAGVHPHQASHWNAQVEAGIRELAVLPNVVAIGECGLDFNRNFSPADRQEAAFTAQLALAKELQLPVFLHCRDAGERFATLLKPWLSDLPGGVVHCFTGTRQELELYLSLGLSIGITGWVCDERRGLELRDMLPLIPADRLMLETDAPYLLPRDMENKPKNRRNEPAFLPHIVKQVALWRGEDPQWLADITDDNARKLFALSARR</sequence>
<gene>
    <name evidence="1" type="primary">tatD</name>
    <name type="ordered locus">Rahaq_4155</name>
</gene>
<evidence type="ECO:0000255" key="1">
    <source>
        <dbReference type="HAMAP-Rule" id="MF_00901"/>
    </source>
</evidence>
<accession>E8XYF5</accession>
<feature type="chain" id="PRO_0000412750" description="3'-5' ssDNA/RNA exonuclease TatD">
    <location>
        <begin position="1"/>
        <end position="263"/>
    </location>
</feature>
<feature type="binding site" evidence="1">
    <location>
        <position position="92"/>
    </location>
    <ligand>
        <name>a divalent metal cation</name>
        <dbReference type="ChEBI" id="CHEBI:60240"/>
    </ligand>
</feature>
<feature type="binding site" evidence="1">
    <location>
        <position position="128"/>
    </location>
    <ligand>
        <name>a divalent metal cation</name>
        <dbReference type="ChEBI" id="CHEBI:60240"/>
    </ligand>
</feature>
<feature type="binding site" evidence="1">
    <location>
        <position position="153"/>
    </location>
    <ligand>
        <name>a divalent metal cation</name>
        <dbReference type="ChEBI" id="CHEBI:60240"/>
    </ligand>
</feature>
<comment type="function">
    <text evidence="1">3'-5' exonuclease that prefers single-stranded DNA and RNA. May play a role in the H(2)O(2)-induced DNA damage repair.</text>
</comment>
<comment type="cofactor">
    <cofactor evidence="1">
        <name>Mg(2+)</name>
        <dbReference type="ChEBI" id="CHEBI:18420"/>
    </cofactor>
</comment>
<comment type="subunit">
    <text evidence="1">Monomer.</text>
</comment>
<comment type="subcellular location">
    <subcellularLocation>
        <location evidence="1">Cytoplasm</location>
    </subcellularLocation>
</comment>
<comment type="similarity">
    <text evidence="1">Belongs to the metallo-dependent hydrolases superfamily. TatD-type hydrolase family. TatD subfamily.</text>
</comment>
<proteinExistence type="inferred from homology"/>
<keyword id="KW-0963">Cytoplasm</keyword>
<keyword id="KW-0269">Exonuclease</keyword>
<keyword id="KW-0378">Hydrolase</keyword>
<keyword id="KW-0460">Magnesium</keyword>
<keyword id="KW-0479">Metal-binding</keyword>
<keyword id="KW-0540">Nuclease</keyword>
<organism>
    <name type="scientific">Rahnella sp. (strain Y9602)</name>
    <dbReference type="NCBI Taxonomy" id="2703885"/>
    <lineage>
        <taxon>Bacteria</taxon>
        <taxon>Pseudomonadati</taxon>
        <taxon>Pseudomonadota</taxon>
        <taxon>Gammaproteobacteria</taxon>
        <taxon>Enterobacterales</taxon>
        <taxon>Yersiniaceae</taxon>
        <taxon>Rahnella</taxon>
    </lineage>
</organism>
<name>TATD_RAHSY</name>
<reference key="1">
    <citation type="submission" date="2011-01" db="EMBL/GenBank/DDBJ databases">
        <title>Complete sequence of chromosome of Rahnella sp. Y9602.</title>
        <authorList>
            <consortium name="US DOE Joint Genome Institute"/>
            <person name="Lucas S."/>
            <person name="Copeland A."/>
            <person name="Lapidus A."/>
            <person name="Cheng J.-F."/>
            <person name="Goodwin L."/>
            <person name="Pitluck S."/>
            <person name="Lu M."/>
            <person name="Detter J.C."/>
            <person name="Han C."/>
            <person name="Tapia R."/>
            <person name="Land M."/>
            <person name="Hauser L."/>
            <person name="Kyrpides N."/>
            <person name="Ivanova N."/>
            <person name="Ovchinnikova G."/>
            <person name="Pagani I."/>
            <person name="Sobecky P.A."/>
            <person name="Martinez R.J."/>
            <person name="Woyke T."/>
        </authorList>
    </citation>
    <scope>NUCLEOTIDE SEQUENCE [LARGE SCALE GENOMIC DNA]</scope>
    <source>
        <strain>Y9602</strain>
    </source>
</reference>
<protein>
    <recommendedName>
        <fullName evidence="1">3'-5' ssDNA/RNA exonuclease TatD</fullName>
        <ecNumber evidence="1">3.1.11.-</ecNumber>
        <ecNumber evidence="1">3.1.13.-</ecNumber>
    </recommendedName>
    <alternativeName>
        <fullName evidence="1">DNase TatD</fullName>
    </alternativeName>
</protein>